<sequence>MVSGRVQALLEQLRAQGIRDELVLNALAAVPREKFIDEAFEHKAWENIALPIGQGQTISQPYMVARMTELLELTPQSRVLEIGTGSGYQTAILAHLVHHVCSVERIKGLQWQARRRLKQLDLHNVSTRHGDGWQGWQARAPFDAIIVTAAPPEIPTALMAQLDEGGILVLPVGDEQQFLKRVRRRGGEFIIDTVEAVRFVPLVKGELA</sequence>
<comment type="function">
    <text evidence="1">Catalyzes the methyl esterification of L-isoaspartyl residues in peptides and proteins that result from spontaneous decomposition of normal L-aspartyl and L-asparaginyl residues. It plays a role in the repair and/or degradation of damaged proteins.</text>
</comment>
<comment type="catalytic activity">
    <reaction evidence="1">
        <text>[protein]-L-isoaspartate + S-adenosyl-L-methionine = [protein]-L-isoaspartate alpha-methyl ester + S-adenosyl-L-homocysteine</text>
        <dbReference type="Rhea" id="RHEA:12705"/>
        <dbReference type="Rhea" id="RHEA-COMP:12143"/>
        <dbReference type="Rhea" id="RHEA-COMP:12144"/>
        <dbReference type="ChEBI" id="CHEBI:57856"/>
        <dbReference type="ChEBI" id="CHEBI:59789"/>
        <dbReference type="ChEBI" id="CHEBI:90596"/>
        <dbReference type="ChEBI" id="CHEBI:90598"/>
        <dbReference type="EC" id="2.1.1.77"/>
    </reaction>
</comment>
<comment type="subcellular location">
    <subcellularLocation>
        <location evidence="1">Cytoplasm</location>
    </subcellularLocation>
</comment>
<comment type="similarity">
    <text evidence="1">Belongs to the methyltransferase superfamily. L-isoaspartyl/D-aspartyl protein methyltransferase family.</text>
</comment>
<keyword id="KW-0963">Cytoplasm</keyword>
<keyword id="KW-0489">Methyltransferase</keyword>
<keyword id="KW-0949">S-adenosyl-L-methionine</keyword>
<keyword id="KW-0808">Transferase</keyword>
<name>PIMT_SALSV</name>
<accession>B4TTV7</accession>
<reference key="1">
    <citation type="journal article" date="2011" name="J. Bacteriol.">
        <title>Comparative genomics of 28 Salmonella enterica isolates: evidence for CRISPR-mediated adaptive sublineage evolution.</title>
        <authorList>
            <person name="Fricke W.F."/>
            <person name="Mammel M.K."/>
            <person name="McDermott P.F."/>
            <person name="Tartera C."/>
            <person name="White D.G."/>
            <person name="Leclerc J.E."/>
            <person name="Ravel J."/>
            <person name="Cebula T.A."/>
        </authorList>
    </citation>
    <scope>NUCLEOTIDE SEQUENCE [LARGE SCALE GENOMIC DNA]</scope>
    <source>
        <strain>CVM19633</strain>
    </source>
</reference>
<protein>
    <recommendedName>
        <fullName evidence="1">Protein-L-isoaspartate O-methyltransferase</fullName>
        <ecNumber evidence="1">2.1.1.77</ecNumber>
    </recommendedName>
    <alternativeName>
        <fullName evidence="1">L-isoaspartyl protein carboxyl methyltransferase</fullName>
    </alternativeName>
    <alternativeName>
        <fullName evidence="1">Protein L-isoaspartyl methyltransferase</fullName>
    </alternativeName>
    <alternativeName>
        <fullName evidence="1">Protein-beta-aspartate methyltransferase</fullName>
        <shortName evidence="1">PIMT</shortName>
    </alternativeName>
</protein>
<feature type="chain" id="PRO_1000093278" description="Protein-L-isoaspartate O-methyltransferase">
    <location>
        <begin position="1"/>
        <end position="208"/>
    </location>
</feature>
<feature type="active site" evidence="1">
    <location>
        <position position="59"/>
    </location>
</feature>
<evidence type="ECO:0000255" key="1">
    <source>
        <dbReference type="HAMAP-Rule" id="MF_00090"/>
    </source>
</evidence>
<organism>
    <name type="scientific">Salmonella schwarzengrund (strain CVM19633)</name>
    <dbReference type="NCBI Taxonomy" id="439843"/>
    <lineage>
        <taxon>Bacteria</taxon>
        <taxon>Pseudomonadati</taxon>
        <taxon>Pseudomonadota</taxon>
        <taxon>Gammaproteobacteria</taxon>
        <taxon>Enterobacterales</taxon>
        <taxon>Enterobacteriaceae</taxon>
        <taxon>Salmonella</taxon>
    </lineage>
</organism>
<gene>
    <name evidence="1" type="primary">pcm</name>
    <name type="ordered locus">SeSA_A3077</name>
</gene>
<dbReference type="EC" id="2.1.1.77" evidence="1"/>
<dbReference type="EMBL" id="CP001127">
    <property type="protein sequence ID" value="ACF92150.1"/>
    <property type="molecule type" value="Genomic_DNA"/>
</dbReference>
<dbReference type="RefSeq" id="WP_000253542.1">
    <property type="nucleotide sequence ID" value="NC_011094.1"/>
</dbReference>
<dbReference type="SMR" id="B4TTV7"/>
<dbReference type="KEGG" id="sew:SeSA_A3077"/>
<dbReference type="HOGENOM" id="CLU_055432_2_0_6"/>
<dbReference type="Proteomes" id="UP000001865">
    <property type="component" value="Chromosome"/>
</dbReference>
<dbReference type="GO" id="GO:0005737">
    <property type="term" value="C:cytoplasm"/>
    <property type="evidence" value="ECO:0007669"/>
    <property type="project" value="UniProtKB-SubCell"/>
</dbReference>
<dbReference type="GO" id="GO:0004719">
    <property type="term" value="F:protein-L-isoaspartate (D-aspartate) O-methyltransferase activity"/>
    <property type="evidence" value="ECO:0007669"/>
    <property type="project" value="UniProtKB-UniRule"/>
</dbReference>
<dbReference type="GO" id="GO:0032259">
    <property type="term" value="P:methylation"/>
    <property type="evidence" value="ECO:0007669"/>
    <property type="project" value="UniProtKB-KW"/>
</dbReference>
<dbReference type="GO" id="GO:0036211">
    <property type="term" value="P:protein modification process"/>
    <property type="evidence" value="ECO:0007669"/>
    <property type="project" value="UniProtKB-UniRule"/>
</dbReference>
<dbReference type="GO" id="GO:0030091">
    <property type="term" value="P:protein repair"/>
    <property type="evidence" value="ECO:0007669"/>
    <property type="project" value="UniProtKB-UniRule"/>
</dbReference>
<dbReference type="CDD" id="cd02440">
    <property type="entry name" value="AdoMet_MTases"/>
    <property type="match status" value="1"/>
</dbReference>
<dbReference type="FunFam" id="3.40.50.150:FF:000010">
    <property type="entry name" value="Protein-L-isoaspartate O-methyltransferase"/>
    <property type="match status" value="1"/>
</dbReference>
<dbReference type="Gene3D" id="3.40.50.150">
    <property type="entry name" value="Vaccinia Virus protein VP39"/>
    <property type="match status" value="1"/>
</dbReference>
<dbReference type="HAMAP" id="MF_00090">
    <property type="entry name" value="PIMT"/>
    <property type="match status" value="1"/>
</dbReference>
<dbReference type="InterPro" id="IPR000682">
    <property type="entry name" value="PCMT"/>
</dbReference>
<dbReference type="InterPro" id="IPR029063">
    <property type="entry name" value="SAM-dependent_MTases_sf"/>
</dbReference>
<dbReference type="NCBIfam" id="TIGR00080">
    <property type="entry name" value="pimt"/>
    <property type="match status" value="1"/>
</dbReference>
<dbReference type="NCBIfam" id="NF001453">
    <property type="entry name" value="PRK00312.1"/>
    <property type="match status" value="1"/>
</dbReference>
<dbReference type="PANTHER" id="PTHR11579">
    <property type="entry name" value="PROTEIN-L-ISOASPARTATE O-METHYLTRANSFERASE"/>
    <property type="match status" value="1"/>
</dbReference>
<dbReference type="PANTHER" id="PTHR11579:SF0">
    <property type="entry name" value="PROTEIN-L-ISOASPARTATE(D-ASPARTATE) O-METHYLTRANSFERASE"/>
    <property type="match status" value="1"/>
</dbReference>
<dbReference type="Pfam" id="PF01135">
    <property type="entry name" value="PCMT"/>
    <property type="match status" value="1"/>
</dbReference>
<dbReference type="SUPFAM" id="SSF53335">
    <property type="entry name" value="S-adenosyl-L-methionine-dependent methyltransferases"/>
    <property type="match status" value="1"/>
</dbReference>
<dbReference type="PROSITE" id="PS01279">
    <property type="entry name" value="PCMT"/>
    <property type="match status" value="1"/>
</dbReference>
<proteinExistence type="inferred from homology"/>